<sequence>MAPRDSAEPLPPLSPQAWAWSGKFLAMGALAGFSVLSLLTYGYLCWGQDLEEEGSLKAQVDERPEAGTAGTSQPHLIFILADDQGFRDVGYHGSEIKTPTLDKLAAEGVKLENYYVQPICTPSRSQFITGKYQIHTGLQHSIIRPTQPNCLPLDNATLPQKLKEVGYSTHMVGKWHLGFYRKDCMPTKRGFDTFFGSLLGSGDYYTHYKCDSPGVCGYDLYENDNAAWDYDNGIYSTQMYTQRVQQILATHDPTKPLFLYVAYQAVHSPLQAPGRYFEHYRSIININRRRYAAMLSCLDEAIHNVTLALKRYGFYNNSIIIYSSDNGGQPTAGGSNWPLRGSKGTYWEGGIRAVGFVHSPLLKNKGTVCKELVHITDWYPTLISLAEGQIDEDIQLDGYDIWETISEGLRSPRVDILHNIDPIYTKAKNGSWAAGYGIWNTAIQSAIRVQHWKLLTGNPGYSDWVPPQAFSNLGPNRWHNERITLSTGKSIWLFNITADPYERVDLSSRYPGIVKKLLRRLSQFNKTAVPVRYPPKDPRSNPRLNGGVWGPWYKEENKKKKSNKTKAKKMQKKKSKARMRKQLAAHSSIKCHPSVATG</sequence>
<reference key="1">
    <citation type="journal article" date="2005" name="Science">
        <title>The transcriptional landscape of the mammalian genome.</title>
        <authorList>
            <person name="Carninci P."/>
            <person name="Kasukawa T."/>
            <person name="Katayama S."/>
            <person name="Gough J."/>
            <person name="Frith M.C."/>
            <person name="Maeda N."/>
            <person name="Oyama R."/>
            <person name="Ravasi T."/>
            <person name="Lenhard B."/>
            <person name="Wells C."/>
            <person name="Kodzius R."/>
            <person name="Shimokawa K."/>
            <person name="Bajic V.B."/>
            <person name="Brenner S.E."/>
            <person name="Batalov S."/>
            <person name="Forrest A.R."/>
            <person name="Zavolan M."/>
            <person name="Davis M.J."/>
            <person name="Wilming L.G."/>
            <person name="Aidinis V."/>
            <person name="Allen J.E."/>
            <person name="Ambesi-Impiombato A."/>
            <person name="Apweiler R."/>
            <person name="Aturaliya R.N."/>
            <person name="Bailey T.L."/>
            <person name="Bansal M."/>
            <person name="Baxter L."/>
            <person name="Beisel K.W."/>
            <person name="Bersano T."/>
            <person name="Bono H."/>
            <person name="Chalk A.M."/>
            <person name="Chiu K.P."/>
            <person name="Choudhary V."/>
            <person name="Christoffels A."/>
            <person name="Clutterbuck D.R."/>
            <person name="Crowe M.L."/>
            <person name="Dalla E."/>
            <person name="Dalrymple B.P."/>
            <person name="de Bono B."/>
            <person name="Della Gatta G."/>
            <person name="di Bernardo D."/>
            <person name="Down T."/>
            <person name="Engstrom P."/>
            <person name="Fagiolini M."/>
            <person name="Faulkner G."/>
            <person name="Fletcher C.F."/>
            <person name="Fukushima T."/>
            <person name="Furuno M."/>
            <person name="Futaki S."/>
            <person name="Gariboldi M."/>
            <person name="Georgii-Hemming P."/>
            <person name="Gingeras T.R."/>
            <person name="Gojobori T."/>
            <person name="Green R.E."/>
            <person name="Gustincich S."/>
            <person name="Harbers M."/>
            <person name="Hayashi Y."/>
            <person name="Hensch T.K."/>
            <person name="Hirokawa N."/>
            <person name="Hill D."/>
            <person name="Huminiecki L."/>
            <person name="Iacono M."/>
            <person name="Ikeo K."/>
            <person name="Iwama A."/>
            <person name="Ishikawa T."/>
            <person name="Jakt M."/>
            <person name="Kanapin A."/>
            <person name="Katoh M."/>
            <person name="Kawasawa Y."/>
            <person name="Kelso J."/>
            <person name="Kitamura H."/>
            <person name="Kitano H."/>
            <person name="Kollias G."/>
            <person name="Krishnan S.P."/>
            <person name="Kruger A."/>
            <person name="Kummerfeld S.K."/>
            <person name="Kurochkin I.V."/>
            <person name="Lareau L.F."/>
            <person name="Lazarevic D."/>
            <person name="Lipovich L."/>
            <person name="Liu J."/>
            <person name="Liuni S."/>
            <person name="McWilliam S."/>
            <person name="Madan Babu M."/>
            <person name="Madera M."/>
            <person name="Marchionni L."/>
            <person name="Matsuda H."/>
            <person name="Matsuzawa S."/>
            <person name="Miki H."/>
            <person name="Mignone F."/>
            <person name="Miyake S."/>
            <person name="Morris K."/>
            <person name="Mottagui-Tabar S."/>
            <person name="Mulder N."/>
            <person name="Nakano N."/>
            <person name="Nakauchi H."/>
            <person name="Ng P."/>
            <person name="Nilsson R."/>
            <person name="Nishiguchi S."/>
            <person name="Nishikawa S."/>
            <person name="Nori F."/>
            <person name="Ohara O."/>
            <person name="Okazaki Y."/>
            <person name="Orlando V."/>
            <person name="Pang K.C."/>
            <person name="Pavan W.J."/>
            <person name="Pavesi G."/>
            <person name="Pesole G."/>
            <person name="Petrovsky N."/>
            <person name="Piazza S."/>
            <person name="Reed J."/>
            <person name="Reid J.F."/>
            <person name="Ring B.Z."/>
            <person name="Ringwald M."/>
            <person name="Rost B."/>
            <person name="Ruan Y."/>
            <person name="Salzberg S.L."/>
            <person name="Sandelin A."/>
            <person name="Schneider C."/>
            <person name="Schoenbach C."/>
            <person name="Sekiguchi K."/>
            <person name="Semple C.A."/>
            <person name="Seno S."/>
            <person name="Sessa L."/>
            <person name="Sheng Y."/>
            <person name="Shibata Y."/>
            <person name="Shimada H."/>
            <person name="Shimada K."/>
            <person name="Silva D."/>
            <person name="Sinclair B."/>
            <person name="Sperling S."/>
            <person name="Stupka E."/>
            <person name="Sugiura K."/>
            <person name="Sultana R."/>
            <person name="Takenaka Y."/>
            <person name="Taki K."/>
            <person name="Tammoja K."/>
            <person name="Tan S.L."/>
            <person name="Tang S."/>
            <person name="Taylor M.S."/>
            <person name="Tegner J."/>
            <person name="Teichmann S.A."/>
            <person name="Ueda H.R."/>
            <person name="van Nimwegen E."/>
            <person name="Verardo R."/>
            <person name="Wei C.L."/>
            <person name="Yagi K."/>
            <person name="Yamanishi H."/>
            <person name="Zabarovsky E."/>
            <person name="Zhu S."/>
            <person name="Zimmer A."/>
            <person name="Hide W."/>
            <person name="Bult C."/>
            <person name="Grimmond S.M."/>
            <person name="Teasdale R.D."/>
            <person name="Liu E.T."/>
            <person name="Brusic V."/>
            <person name="Quackenbush J."/>
            <person name="Wahlestedt C."/>
            <person name="Mattick J.S."/>
            <person name="Hume D.A."/>
            <person name="Kai C."/>
            <person name="Sasaki D."/>
            <person name="Tomaru Y."/>
            <person name="Fukuda S."/>
            <person name="Kanamori-Katayama M."/>
            <person name="Suzuki M."/>
            <person name="Aoki J."/>
            <person name="Arakawa T."/>
            <person name="Iida J."/>
            <person name="Imamura K."/>
            <person name="Itoh M."/>
            <person name="Kato T."/>
            <person name="Kawaji H."/>
            <person name="Kawagashira N."/>
            <person name="Kawashima T."/>
            <person name="Kojima M."/>
            <person name="Kondo S."/>
            <person name="Konno H."/>
            <person name="Nakano K."/>
            <person name="Ninomiya N."/>
            <person name="Nishio T."/>
            <person name="Okada M."/>
            <person name="Plessy C."/>
            <person name="Shibata K."/>
            <person name="Shiraki T."/>
            <person name="Suzuki S."/>
            <person name="Tagami M."/>
            <person name="Waki K."/>
            <person name="Watahiki A."/>
            <person name="Okamura-Oho Y."/>
            <person name="Suzuki H."/>
            <person name="Kawai J."/>
            <person name="Hayashizaki Y."/>
        </authorList>
    </citation>
    <scope>NUCLEOTIDE SEQUENCE [LARGE SCALE MRNA]</scope>
    <source>
        <strain>C57BL/6J</strain>
        <tissue>Corpora quadrigemina</tissue>
        <tissue>Diencephalon</tissue>
        <tissue>Heart</tissue>
    </source>
</reference>
<organism>
    <name type="scientific">Mus musculus</name>
    <name type="common">Mouse</name>
    <dbReference type="NCBI Taxonomy" id="10090"/>
    <lineage>
        <taxon>Eukaryota</taxon>
        <taxon>Metazoa</taxon>
        <taxon>Chordata</taxon>
        <taxon>Craniata</taxon>
        <taxon>Vertebrata</taxon>
        <taxon>Euteleostomi</taxon>
        <taxon>Mammalia</taxon>
        <taxon>Eutheria</taxon>
        <taxon>Euarchontoglires</taxon>
        <taxon>Glires</taxon>
        <taxon>Rodentia</taxon>
        <taxon>Myomorpha</taxon>
        <taxon>Muroidea</taxon>
        <taxon>Muridae</taxon>
        <taxon>Murinae</taxon>
        <taxon>Mus</taxon>
        <taxon>Mus</taxon>
    </lineage>
</organism>
<evidence type="ECO:0000250" key="1">
    <source>
        <dbReference type="UniProtKB" id="P15289"/>
    </source>
</evidence>
<evidence type="ECO:0000255" key="2"/>
<evidence type="ECO:0000256" key="3">
    <source>
        <dbReference type="SAM" id="MobiDB-lite"/>
    </source>
</evidence>
<evidence type="ECO:0000305" key="4"/>
<dbReference type="EC" id="3.1.6.-"/>
<dbReference type="EMBL" id="AK034454">
    <property type="protein sequence ID" value="BAC28715.1"/>
    <property type="molecule type" value="mRNA"/>
</dbReference>
<dbReference type="EMBL" id="AK046410">
    <property type="protein sequence ID" value="BAC32714.1"/>
    <property type="molecule type" value="mRNA"/>
</dbReference>
<dbReference type="EMBL" id="AK052931">
    <property type="protein sequence ID" value="BAC35208.1"/>
    <property type="molecule type" value="mRNA"/>
</dbReference>
<dbReference type="CCDS" id="CCDS17822.1"/>
<dbReference type="RefSeq" id="NP_775627.1">
    <property type="nucleotide sequence ID" value="NM_173451.4"/>
</dbReference>
<dbReference type="SMR" id="Q8BM89"/>
<dbReference type="BioGRID" id="234858">
    <property type="interactions" value="1"/>
</dbReference>
<dbReference type="FunCoup" id="Q8BM89">
    <property type="interactions" value="21"/>
</dbReference>
<dbReference type="STRING" id="10090.ENSMUSP00000091511"/>
<dbReference type="GlyCosmos" id="Q8BM89">
    <property type="glycosylation" value="7 sites, No reported glycans"/>
</dbReference>
<dbReference type="GlyGen" id="Q8BM89">
    <property type="glycosylation" value="7 sites"/>
</dbReference>
<dbReference type="iPTMnet" id="Q8BM89"/>
<dbReference type="PhosphoSitePlus" id="Q8BM89"/>
<dbReference type="PaxDb" id="10090-ENSMUSP00000091511"/>
<dbReference type="ProteomicsDB" id="277236"/>
<dbReference type="Antibodypedia" id="48673">
    <property type="antibodies" value="38 antibodies from 19 providers"/>
</dbReference>
<dbReference type="DNASU" id="271970"/>
<dbReference type="Ensembl" id="ENSMUST00000093976.4">
    <property type="protein sequence ID" value="ENSMUSP00000091511.3"/>
    <property type="gene ID" value="ENSMUSG00000046561.10"/>
</dbReference>
<dbReference type="GeneID" id="271970"/>
<dbReference type="KEGG" id="mmu:271970"/>
<dbReference type="UCSC" id="uc008rgc.1">
    <property type="organism name" value="mouse"/>
</dbReference>
<dbReference type="AGR" id="MGI:2443513"/>
<dbReference type="CTD" id="79642"/>
<dbReference type="MGI" id="MGI:2443513">
    <property type="gene designation" value="Arsj"/>
</dbReference>
<dbReference type="VEuPathDB" id="HostDB:ENSMUSG00000046561"/>
<dbReference type="eggNOG" id="KOG3867">
    <property type="taxonomic scope" value="Eukaryota"/>
</dbReference>
<dbReference type="GeneTree" id="ENSGT00940000159954"/>
<dbReference type="HOGENOM" id="CLU_006332_10_1_1"/>
<dbReference type="InParanoid" id="Q8BM89"/>
<dbReference type="OMA" id="MYSTQMY"/>
<dbReference type="OrthoDB" id="103349at2759"/>
<dbReference type="PhylomeDB" id="Q8BM89"/>
<dbReference type="TreeFam" id="TF314186"/>
<dbReference type="Reactome" id="R-MMU-1663150">
    <property type="pathway name" value="The activation of arylsulfatases"/>
</dbReference>
<dbReference type="Reactome" id="R-MMU-9840310">
    <property type="pathway name" value="Glycosphingolipid catabolism"/>
</dbReference>
<dbReference type="BioGRID-ORCS" id="271970">
    <property type="hits" value="3 hits in 79 CRISPR screens"/>
</dbReference>
<dbReference type="PRO" id="PR:Q8BM89"/>
<dbReference type="Proteomes" id="UP000000589">
    <property type="component" value="Chromosome 3"/>
</dbReference>
<dbReference type="RNAct" id="Q8BM89">
    <property type="molecule type" value="protein"/>
</dbReference>
<dbReference type="Bgee" id="ENSMUSG00000046561">
    <property type="expression patterns" value="Expressed in endothelial cell of lymphatic vessel and 74 other cell types or tissues"/>
</dbReference>
<dbReference type="ExpressionAtlas" id="Q8BM89">
    <property type="expression patterns" value="baseline and differential"/>
</dbReference>
<dbReference type="GO" id="GO:0015629">
    <property type="term" value="C:actin cytoskeleton"/>
    <property type="evidence" value="ECO:0007669"/>
    <property type="project" value="Ensembl"/>
</dbReference>
<dbReference type="GO" id="GO:0005576">
    <property type="term" value="C:extracellular region"/>
    <property type="evidence" value="ECO:0007669"/>
    <property type="project" value="UniProtKB-SubCell"/>
</dbReference>
<dbReference type="GO" id="GO:0046872">
    <property type="term" value="F:metal ion binding"/>
    <property type="evidence" value="ECO:0007669"/>
    <property type="project" value="UniProtKB-KW"/>
</dbReference>
<dbReference type="GO" id="GO:0008484">
    <property type="term" value="F:sulfuric ester hydrolase activity"/>
    <property type="evidence" value="ECO:0007669"/>
    <property type="project" value="InterPro"/>
</dbReference>
<dbReference type="CDD" id="cd16029">
    <property type="entry name" value="4-S"/>
    <property type="match status" value="1"/>
</dbReference>
<dbReference type="FunFam" id="3.30.1120.10:FF:000002">
    <property type="entry name" value="Arylsulfatase family member J"/>
    <property type="match status" value="1"/>
</dbReference>
<dbReference type="FunFam" id="3.40.720.10:FF:000007">
    <property type="entry name" value="Arylsulfatase family, member J"/>
    <property type="match status" value="1"/>
</dbReference>
<dbReference type="Gene3D" id="3.30.1120.10">
    <property type="match status" value="1"/>
</dbReference>
<dbReference type="Gene3D" id="3.40.720.10">
    <property type="entry name" value="Alkaline Phosphatase, subunit A"/>
    <property type="match status" value="1"/>
</dbReference>
<dbReference type="InterPro" id="IPR017850">
    <property type="entry name" value="Alkaline_phosphatase_core_sf"/>
</dbReference>
<dbReference type="InterPro" id="IPR047115">
    <property type="entry name" value="ARSB"/>
</dbReference>
<dbReference type="InterPro" id="IPR024607">
    <property type="entry name" value="Sulfatase_CS"/>
</dbReference>
<dbReference type="InterPro" id="IPR000917">
    <property type="entry name" value="Sulfatase_N"/>
</dbReference>
<dbReference type="PANTHER" id="PTHR10342">
    <property type="entry name" value="ARYLSULFATASE"/>
    <property type="match status" value="1"/>
</dbReference>
<dbReference type="PANTHER" id="PTHR10342:SF69">
    <property type="entry name" value="ARYLSULFATASE J"/>
    <property type="match status" value="1"/>
</dbReference>
<dbReference type="Pfam" id="PF00884">
    <property type="entry name" value="Sulfatase"/>
    <property type="match status" value="1"/>
</dbReference>
<dbReference type="SUPFAM" id="SSF53649">
    <property type="entry name" value="Alkaline phosphatase-like"/>
    <property type="match status" value="1"/>
</dbReference>
<dbReference type="PROSITE" id="PS00523">
    <property type="entry name" value="SULFATASE_1"/>
    <property type="match status" value="1"/>
</dbReference>
<dbReference type="PROSITE" id="PS00149">
    <property type="entry name" value="SULFATASE_2"/>
    <property type="match status" value="1"/>
</dbReference>
<protein>
    <recommendedName>
        <fullName>Arylsulfatase J</fullName>
        <shortName>ASJ</shortName>
        <ecNumber>3.1.6.-</ecNumber>
    </recommendedName>
</protein>
<accession>Q8BM89</accession>
<accession>Q8BKG5</accession>
<accession>Q8BL46</accession>
<name>ARSJ_MOUSE</name>
<gene>
    <name type="primary">Arsj</name>
</gene>
<comment type="cofactor">
    <cofactor evidence="1">
        <name>Ca(2+)</name>
        <dbReference type="ChEBI" id="CHEBI:29108"/>
    </cofactor>
    <text evidence="1">Binds 1 Ca(2+) ion per subunit.</text>
</comment>
<comment type="subcellular location">
    <subcellularLocation>
        <location evidence="4">Secreted</location>
    </subcellularLocation>
</comment>
<comment type="PTM">
    <text evidence="1">The conversion to 3-oxoalanine (also known as C-formylglycine, FGly), of a serine or cysteine residue in prokaryotes and of a cysteine residue in eukaryotes, is critical for catalytic activity.</text>
</comment>
<comment type="similarity">
    <text evidence="4">Belongs to the sulfatase family.</text>
</comment>
<feature type="signal peptide" evidence="2">
    <location>
        <begin position="1"/>
        <end position="47"/>
    </location>
</feature>
<feature type="chain" id="PRO_0000042218" description="Arylsulfatase J">
    <location>
        <begin position="48"/>
        <end position="598"/>
    </location>
</feature>
<feature type="region of interest" description="Disordered" evidence="3">
    <location>
        <begin position="532"/>
        <end position="598"/>
    </location>
</feature>
<feature type="compositionally biased region" description="Basic residues" evidence="3">
    <location>
        <begin position="559"/>
        <end position="583"/>
    </location>
</feature>
<feature type="active site" description="Nucleophile" evidence="1">
    <location>
        <position position="120"/>
    </location>
</feature>
<feature type="active site" evidence="1">
    <location>
        <position position="176"/>
    </location>
</feature>
<feature type="binding site" evidence="1">
    <location>
        <position position="82"/>
    </location>
    <ligand>
        <name>Ca(2+)</name>
        <dbReference type="ChEBI" id="CHEBI:29108"/>
    </ligand>
</feature>
<feature type="binding site" evidence="1">
    <location>
        <position position="83"/>
    </location>
    <ligand>
        <name>Ca(2+)</name>
        <dbReference type="ChEBI" id="CHEBI:29108"/>
    </ligand>
</feature>
<feature type="binding site" description="via 3-oxoalanine" evidence="1">
    <location>
        <position position="120"/>
    </location>
    <ligand>
        <name>Ca(2+)</name>
        <dbReference type="ChEBI" id="CHEBI:29108"/>
    </ligand>
</feature>
<feature type="binding site" evidence="1">
    <location>
        <position position="174"/>
    </location>
    <ligand>
        <name>substrate</name>
    </ligand>
</feature>
<feature type="binding site" evidence="1">
    <location>
        <position position="267"/>
    </location>
    <ligand>
        <name>substrate</name>
    </ligand>
</feature>
<feature type="binding site" evidence="1">
    <location>
        <position position="325"/>
    </location>
    <ligand>
        <name>Ca(2+)</name>
        <dbReference type="ChEBI" id="CHEBI:29108"/>
    </ligand>
</feature>
<feature type="binding site" evidence="1">
    <location>
        <position position="326"/>
    </location>
    <ligand>
        <name>Ca(2+)</name>
        <dbReference type="ChEBI" id="CHEBI:29108"/>
    </ligand>
</feature>
<feature type="binding site" evidence="1">
    <location>
        <position position="343"/>
    </location>
    <ligand>
        <name>substrate</name>
    </ligand>
</feature>
<feature type="modified residue" description="3-oxoalanine (Cys)" evidence="1">
    <location>
        <position position="120"/>
    </location>
</feature>
<feature type="glycosylation site" description="N-linked (GlcNAc...) asparagine" evidence="2">
    <location>
        <position position="155"/>
    </location>
</feature>
<feature type="glycosylation site" description="N-linked (GlcNAc...) asparagine" evidence="2">
    <location>
        <position position="304"/>
    </location>
</feature>
<feature type="glycosylation site" description="N-linked (GlcNAc...) asparagine" evidence="2">
    <location>
        <position position="316"/>
    </location>
</feature>
<feature type="glycosylation site" description="N-linked (GlcNAc...) asparagine" evidence="2">
    <location>
        <position position="429"/>
    </location>
</feature>
<feature type="glycosylation site" description="N-linked (GlcNAc...) asparagine" evidence="2">
    <location>
        <position position="495"/>
    </location>
</feature>
<feature type="glycosylation site" description="N-linked (GlcNAc...) asparagine" evidence="2">
    <location>
        <position position="525"/>
    </location>
</feature>
<feature type="glycosylation site" description="N-linked (GlcNAc...) asparagine" evidence="2">
    <location>
        <position position="563"/>
    </location>
</feature>
<keyword id="KW-0106">Calcium</keyword>
<keyword id="KW-0325">Glycoprotein</keyword>
<keyword id="KW-0378">Hydrolase</keyword>
<keyword id="KW-0479">Metal-binding</keyword>
<keyword id="KW-1185">Reference proteome</keyword>
<keyword id="KW-0964">Secreted</keyword>
<keyword id="KW-0732">Signal</keyword>
<proteinExistence type="evidence at transcript level"/>